<name>ISCS_ACIB3</name>
<gene>
    <name evidence="1" type="primary">iscS</name>
    <name type="ordered locus">ABBFA_001865</name>
</gene>
<keyword id="KW-0001">2Fe-2S</keyword>
<keyword id="KW-0963">Cytoplasm</keyword>
<keyword id="KW-0408">Iron</keyword>
<keyword id="KW-0411">Iron-sulfur</keyword>
<keyword id="KW-0479">Metal-binding</keyword>
<keyword id="KW-0663">Pyridoxal phosphate</keyword>
<keyword id="KW-0808">Transferase</keyword>
<organism>
    <name type="scientific">Acinetobacter baumannii (strain AB307-0294)</name>
    <dbReference type="NCBI Taxonomy" id="557600"/>
    <lineage>
        <taxon>Bacteria</taxon>
        <taxon>Pseudomonadati</taxon>
        <taxon>Pseudomonadota</taxon>
        <taxon>Gammaproteobacteria</taxon>
        <taxon>Moraxellales</taxon>
        <taxon>Moraxellaceae</taxon>
        <taxon>Acinetobacter</taxon>
        <taxon>Acinetobacter calcoaceticus/baumannii complex</taxon>
    </lineage>
</organism>
<proteinExistence type="inferred from homology"/>
<evidence type="ECO:0000255" key="1">
    <source>
        <dbReference type="HAMAP-Rule" id="MF_00331"/>
    </source>
</evidence>
<comment type="function">
    <text evidence="1">Master enzyme that delivers sulfur to a number of partners involved in Fe-S cluster assembly, tRNA modification or cofactor biosynthesis. Catalyzes the removal of elemental sulfur atoms from cysteine to produce alanine. Functions as a sulfur delivery protein for Fe-S cluster synthesis onto IscU, an Fe-S scaffold assembly protein, as well as other S acceptor proteins.</text>
</comment>
<comment type="catalytic activity">
    <reaction evidence="1">
        <text>(sulfur carrier)-H + L-cysteine = (sulfur carrier)-SH + L-alanine</text>
        <dbReference type="Rhea" id="RHEA:43892"/>
        <dbReference type="Rhea" id="RHEA-COMP:14737"/>
        <dbReference type="Rhea" id="RHEA-COMP:14739"/>
        <dbReference type="ChEBI" id="CHEBI:29917"/>
        <dbReference type="ChEBI" id="CHEBI:35235"/>
        <dbReference type="ChEBI" id="CHEBI:57972"/>
        <dbReference type="ChEBI" id="CHEBI:64428"/>
        <dbReference type="EC" id="2.8.1.7"/>
    </reaction>
</comment>
<comment type="cofactor">
    <cofactor evidence="1">
        <name>pyridoxal 5'-phosphate</name>
        <dbReference type="ChEBI" id="CHEBI:597326"/>
    </cofactor>
</comment>
<comment type="pathway">
    <text evidence="1">Cofactor biosynthesis; iron-sulfur cluster biosynthesis.</text>
</comment>
<comment type="subunit">
    <text evidence="1">Homodimer. Forms a heterotetramer with IscU, interacts with other sulfur acceptors.</text>
</comment>
<comment type="subcellular location">
    <subcellularLocation>
        <location evidence="1">Cytoplasm</location>
    </subcellularLocation>
</comment>
<comment type="similarity">
    <text evidence="1">Belongs to the class-V pyridoxal-phosphate-dependent aminotransferase family. NifS/IscS subfamily.</text>
</comment>
<dbReference type="EC" id="2.8.1.7" evidence="1"/>
<dbReference type="EMBL" id="CP001172">
    <property type="protein sequence ID" value="ACJ57964.1"/>
    <property type="molecule type" value="Genomic_DNA"/>
</dbReference>
<dbReference type="RefSeq" id="WP_000828390.1">
    <property type="nucleotide sequence ID" value="NZ_CP001172.1"/>
</dbReference>
<dbReference type="SMR" id="B7H3H0"/>
<dbReference type="HOGENOM" id="CLU_003433_0_2_6"/>
<dbReference type="UniPathway" id="UPA00266"/>
<dbReference type="Proteomes" id="UP000006924">
    <property type="component" value="Chromosome"/>
</dbReference>
<dbReference type="GO" id="GO:1990221">
    <property type="term" value="C:L-cysteine desulfurase complex"/>
    <property type="evidence" value="ECO:0007669"/>
    <property type="project" value="UniProtKB-ARBA"/>
</dbReference>
<dbReference type="GO" id="GO:0051537">
    <property type="term" value="F:2 iron, 2 sulfur cluster binding"/>
    <property type="evidence" value="ECO:0007669"/>
    <property type="project" value="UniProtKB-UniRule"/>
</dbReference>
<dbReference type="GO" id="GO:0031071">
    <property type="term" value="F:cysteine desulfurase activity"/>
    <property type="evidence" value="ECO:0007669"/>
    <property type="project" value="UniProtKB-UniRule"/>
</dbReference>
<dbReference type="GO" id="GO:0046872">
    <property type="term" value="F:metal ion binding"/>
    <property type="evidence" value="ECO:0007669"/>
    <property type="project" value="UniProtKB-KW"/>
</dbReference>
<dbReference type="GO" id="GO:0030170">
    <property type="term" value="F:pyridoxal phosphate binding"/>
    <property type="evidence" value="ECO:0007669"/>
    <property type="project" value="UniProtKB-UniRule"/>
</dbReference>
<dbReference type="GO" id="GO:0044571">
    <property type="term" value="P:[2Fe-2S] cluster assembly"/>
    <property type="evidence" value="ECO:0007669"/>
    <property type="project" value="UniProtKB-UniRule"/>
</dbReference>
<dbReference type="FunFam" id="3.40.640.10:FF:000003">
    <property type="entry name" value="Cysteine desulfurase IscS"/>
    <property type="match status" value="1"/>
</dbReference>
<dbReference type="FunFam" id="3.90.1150.10:FF:000002">
    <property type="entry name" value="Cysteine desulfurase IscS"/>
    <property type="match status" value="1"/>
</dbReference>
<dbReference type="Gene3D" id="3.90.1150.10">
    <property type="entry name" value="Aspartate Aminotransferase, domain 1"/>
    <property type="match status" value="1"/>
</dbReference>
<dbReference type="Gene3D" id="3.40.640.10">
    <property type="entry name" value="Type I PLP-dependent aspartate aminotransferase-like (Major domain)"/>
    <property type="match status" value="1"/>
</dbReference>
<dbReference type="HAMAP" id="MF_00331">
    <property type="entry name" value="Cys_desulf_IscS"/>
    <property type="match status" value="1"/>
</dbReference>
<dbReference type="InterPro" id="IPR000192">
    <property type="entry name" value="Aminotrans_V_dom"/>
</dbReference>
<dbReference type="InterPro" id="IPR020578">
    <property type="entry name" value="Aminotrans_V_PyrdxlP_BS"/>
</dbReference>
<dbReference type="InterPro" id="IPR010240">
    <property type="entry name" value="Cys_deSase_IscS"/>
</dbReference>
<dbReference type="InterPro" id="IPR016454">
    <property type="entry name" value="Cysteine_dSase"/>
</dbReference>
<dbReference type="InterPro" id="IPR015424">
    <property type="entry name" value="PyrdxlP-dep_Trfase"/>
</dbReference>
<dbReference type="InterPro" id="IPR015421">
    <property type="entry name" value="PyrdxlP-dep_Trfase_major"/>
</dbReference>
<dbReference type="InterPro" id="IPR015422">
    <property type="entry name" value="PyrdxlP-dep_Trfase_small"/>
</dbReference>
<dbReference type="NCBIfam" id="TIGR02006">
    <property type="entry name" value="IscS"/>
    <property type="match status" value="1"/>
</dbReference>
<dbReference type="NCBIfam" id="NF010611">
    <property type="entry name" value="PRK14012.1"/>
    <property type="match status" value="1"/>
</dbReference>
<dbReference type="PANTHER" id="PTHR11601:SF34">
    <property type="entry name" value="CYSTEINE DESULFURASE"/>
    <property type="match status" value="1"/>
</dbReference>
<dbReference type="PANTHER" id="PTHR11601">
    <property type="entry name" value="CYSTEINE DESULFURYLASE FAMILY MEMBER"/>
    <property type="match status" value="1"/>
</dbReference>
<dbReference type="Pfam" id="PF00266">
    <property type="entry name" value="Aminotran_5"/>
    <property type="match status" value="1"/>
</dbReference>
<dbReference type="PIRSF" id="PIRSF005572">
    <property type="entry name" value="NifS"/>
    <property type="match status" value="1"/>
</dbReference>
<dbReference type="SUPFAM" id="SSF53383">
    <property type="entry name" value="PLP-dependent transferases"/>
    <property type="match status" value="1"/>
</dbReference>
<dbReference type="PROSITE" id="PS00595">
    <property type="entry name" value="AA_TRANSFER_CLASS_5"/>
    <property type="match status" value="1"/>
</dbReference>
<protein>
    <recommendedName>
        <fullName evidence="1">Cysteine desulfurase IscS</fullName>
        <ecNumber evidence="1">2.8.1.7</ecNumber>
    </recommendedName>
</protein>
<reference key="1">
    <citation type="journal article" date="2008" name="J. Bacteriol.">
        <title>Comparative genome sequence analysis of multidrug-resistant Acinetobacter baumannii.</title>
        <authorList>
            <person name="Adams M.D."/>
            <person name="Goglin K."/>
            <person name="Molyneaux N."/>
            <person name="Hujer K.M."/>
            <person name="Lavender H."/>
            <person name="Jamison J.J."/>
            <person name="MacDonald I.J."/>
            <person name="Martin K.M."/>
            <person name="Russo T."/>
            <person name="Campagnari A.A."/>
            <person name="Hujer A.M."/>
            <person name="Bonomo R.A."/>
            <person name="Gill S.R."/>
        </authorList>
    </citation>
    <scope>NUCLEOTIDE SEQUENCE [LARGE SCALE GENOMIC DNA]</scope>
    <source>
        <strain>AB307-0294</strain>
    </source>
</reference>
<sequence>MKRPIYLDYAATTPVDPQVAERMMECLTFDGTFGNAASRSHAYGWQAEEKVEYAREQVANLIKADPREIVWTSGATESDNLALKGVAQFYASKGKHIITSKIEHKAVLDPCRELEEQGFEITYLEPEPQTGLITPEMVKAALRPDTILVSLMMVNNEIGTVTDVAAIGELTRANKTFFHVDAAQAAGKVDIDLSTMKIDLMSFSAHKIYGPKGIGALYVRRSPRVRLKAQIHGGGHERGMRSGTLATHQIVGMGEAFELAGKTMHAEQERIRKLRDKLWNGLQDLEQVFLNGHPTQNVANYLNVSFNFVEGESLMMSLKDAAVSSGSACTSATLEPSYVLRALGLSDELAHSSIRFSFGKYTTEEDIDHVLTITKAAVEKLRELSPLWDMYKEGIDLSTVEWAEH</sequence>
<feature type="chain" id="PRO_1000119614" description="Cysteine desulfurase IscS">
    <location>
        <begin position="1"/>
        <end position="405"/>
    </location>
</feature>
<feature type="active site" description="Cysteine persulfide intermediate" evidence="1">
    <location>
        <position position="329"/>
    </location>
</feature>
<feature type="binding site" evidence="1">
    <location>
        <begin position="75"/>
        <end position="76"/>
    </location>
    <ligand>
        <name>pyridoxal 5'-phosphate</name>
        <dbReference type="ChEBI" id="CHEBI:597326"/>
    </ligand>
</feature>
<feature type="binding site" evidence="1">
    <location>
        <position position="156"/>
    </location>
    <ligand>
        <name>pyridoxal 5'-phosphate</name>
        <dbReference type="ChEBI" id="CHEBI:597326"/>
    </ligand>
</feature>
<feature type="binding site" evidence="1">
    <location>
        <position position="184"/>
    </location>
    <ligand>
        <name>pyridoxal 5'-phosphate</name>
        <dbReference type="ChEBI" id="CHEBI:597326"/>
    </ligand>
</feature>
<feature type="binding site" evidence="1">
    <location>
        <begin position="204"/>
        <end position="206"/>
    </location>
    <ligand>
        <name>pyridoxal 5'-phosphate</name>
        <dbReference type="ChEBI" id="CHEBI:597326"/>
    </ligand>
</feature>
<feature type="binding site" evidence="1">
    <location>
        <position position="244"/>
    </location>
    <ligand>
        <name>pyridoxal 5'-phosphate</name>
        <dbReference type="ChEBI" id="CHEBI:597326"/>
    </ligand>
</feature>
<feature type="binding site" description="via persulfide group" evidence="1">
    <location>
        <position position="329"/>
    </location>
    <ligand>
        <name>[2Fe-2S] cluster</name>
        <dbReference type="ChEBI" id="CHEBI:190135"/>
        <note>ligand shared with IscU</note>
    </ligand>
</feature>
<feature type="modified residue" description="N6-(pyridoxal phosphate)lysine" evidence="1">
    <location>
        <position position="207"/>
    </location>
</feature>
<accession>B7H3H0</accession>